<sequence>MTNAFNTSNSQAVFHAAQELMPGGVSSPVRAFKSVNGDPIVFDRVKGAYAWDLDGNRFIDYVGSWGPAICGHSHPEVIASLQEALEKGTSFGAPCELENKLAEMVIEAVPSVEMVRFVNSGTEACMAVLRLMRAFTGRDKLIKFEGCYHGHADMFLVKAGSGVATLGLPDSPGVPRSTTSNTLTAPYNDLEAVKNLFAENPDAIAGVILEPIVGNAGFIQPEPGFLEGLRELTKENGSLLVFDEVMTGFRISYGGAQGRFGVTPDLTTMGKVIGGGLPVGAYGGRKDIMSMVAPAGPMYQAGTLSGNPLAMTAGIKTLEILQQEGTYERLASITNRLINGICESAKQAGIPITGSSISGMFGFYLCEGPVRNFEEAKQTNSDYFGKLHRAMLAKGVYLAPSAFEAGFTSLAHSEEDIDSTLKAFNECFNELSQ</sequence>
<name>GSA_PROMA</name>
<feature type="chain" id="PRO_0000243596" description="Glutamate-1-semialdehyde 2,1-aminomutase">
    <location>
        <begin position="1"/>
        <end position="433"/>
    </location>
</feature>
<feature type="modified residue" description="N6-(pyridoxal phosphate)lysine" evidence="1">
    <location>
        <position position="271"/>
    </location>
</feature>
<proteinExistence type="inferred from homology"/>
<accession>Q7VDA1</accession>
<dbReference type="EC" id="5.4.3.8" evidence="1"/>
<dbReference type="EMBL" id="AE017126">
    <property type="protein sequence ID" value="AAP99527.1"/>
    <property type="molecule type" value="Genomic_DNA"/>
</dbReference>
<dbReference type="RefSeq" id="NP_874875.1">
    <property type="nucleotide sequence ID" value="NC_005042.1"/>
</dbReference>
<dbReference type="RefSeq" id="WP_011124636.1">
    <property type="nucleotide sequence ID" value="NC_005042.1"/>
</dbReference>
<dbReference type="SMR" id="Q7VDA1"/>
<dbReference type="STRING" id="167539.Pro_0482"/>
<dbReference type="EnsemblBacteria" id="AAP99527">
    <property type="protein sequence ID" value="AAP99527"/>
    <property type="gene ID" value="Pro_0482"/>
</dbReference>
<dbReference type="KEGG" id="pma:Pro_0482"/>
<dbReference type="PATRIC" id="fig|167539.5.peg.495"/>
<dbReference type="eggNOG" id="COG0001">
    <property type="taxonomic scope" value="Bacteria"/>
</dbReference>
<dbReference type="HOGENOM" id="CLU_016922_1_5_3"/>
<dbReference type="OrthoDB" id="9807885at2"/>
<dbReference type="UniPathway" id="UPA00251">
    <property type="reaction ID" value="UER00317"/>
</dbReference>
<dbReference type="UniPathway" id="UPA00668"/>
<dbReference type="Proteomes" id="UP000001420">
    <property type="component" value="Chromosome"/>
</dbReference>
<dbReference type="GO" id="GO:0005737">
    <property type="term" value="C:cytoplasm"/>
    <property type="evidence" value="ECO:0007669"/>
    <property type="project" value="UniProtKB-SubCell"/>
</dbReference>
<dbReference type="GO" id="GO:0042286">
    <property type="term" value="F:glutamate-1-semialdehyde 2,1-aminomutase activity"/>
    <property type="evidence" value="ECO:0007669"/>
    <property type="project" value="UniProtKB-UniRule"/>
</dbReference>
<dbReference type="GO" id="GO:0030170">
    <property type="term" value="F:pyridoxal phosphate binding"/>
    <property type="evidence" value="ECO:0007669"/>
    <property type="project" value="InterPro"/>
</dbReference>
<dbReference type="GO" id="GO:0008483">
    <property type="term" value="F:transaminase activity"/>
    <property type="evidence" value="ECO:0007669"/>
    <property type="project" value="InterPro"/>
</dbReference>
<dbReference type="GO" id="GO:0015995">
    <property type="term" value="P:chlorophyll biosynthetic process"/>
    <property type="evidence" value="ECO:0007669"/>
    <property type="project" value="UniProtKB-UniRule"/>
</dbReference>
<dbReference type="GO" id="GO:0006782">
    <property type="term" value="P:protoporphyrinogen IX biosynthetic process"/>
    <property type="evidence" value="ECO:0007669"/>
    <property type="project" value="UniProtKB-UniRule"/>
</dbReference>
<dbReference type="CDD" id="cd00610">
    <property type="entry name" value="OAT_like"/>
    <property type="match status" value="1"/>
</dbReference>
<dbReference type="FunFam" id="3.40.640.10:FF:000021">
    <property type="entry name" value="Glutamate-1-semialdehyde 2,1-aminomutase"/>
    <property type="match status" value="1"/>
</dbReference>
<dbReference type="Gene3D" id="3.90.1150.10">
    <property type="entry name" value="Aspartate Aminotransferase, domain 1"/>
    <property type="match status" value="1"/>
</dbReference>
<dbReference type="Gene3D" id="3.40.640.10">
    <property type="entry name" value="Type I PLP-dependent aspartate aminotransferase-like (Major domain)"/>
    <property type="match status" value="1"/>
</dbReference>
<dbReference type="HAMAP" id="MF_00375">
    <property type="entry name" value="HemL_aminotrans_3"/>
    <property type="match status" value="1"/>
</dbReference>
<dbReference type="InterPro" id="IPR004639">
    <property type="entry name" value="4pyrrol_synth_GluAld_NH2Trfase"/>
</dbReference>
<dbReference type="InterPro" id="IPR005814">
    <property type="entry name" value="Aminotrans_3"/>
</dbReference>
<dbReference type="InterPro" id="IPR049704">
    <property type="entry name" value="Aminotrans_3_PPA_site"/>
</dbReference>
<dbReference type="InterPro" id="IPR015424">
    <property type="entry name" value="PyrdxlP-dep_Trfase"/>
</dbReference>
<dbReference type="InterPro" id="IPR015421">
    <property type="entry name" value="PyrdxlP-dep_Trfase_major"/>
</dbReference>
<dbReference type="InterPro" id="IPR015422">
    <property type="entry name" value="PyrdxlP-dep_Trfase_small"/>
</dbReference>
<dbReference type="NCBIfam" id="TIGR00713">
    <property type="entry name" value="hemL"/>
    <property type="match status" value="1"/>
</dbReference>
<dbReference type="NCBIfam" id="NF000818">
    <property type="entry name" value="PRK00062.1"/>
    <property type="match status" value="1"/>
</dbReference>
<dbReference type="PANTHER" id="PTHR43713">
    <property type="entry name" value="GLUTAMATE-1-SEMIALDEHYDE 2,1-AMINOMUTASE"/>
    <property type="match status" value="1"/>
</dbReference>
<dbReference type="PANTHER" id="PTHR43713:SF3">
    <property type="entry name" value="GLUTAMATE-1-SEMIALDEHYDE 2,1-AMINOMUTASE 1, CHLOROPLASTIC-RELATED"/>
    <property type="match status" value="1"/>
</dbReference>
<dbReference type="Pfam" id="PF00202">
    <property type="entry name" value="Aminotran_3"/>
    <property type="match status" value="1"/>
</dbReference>
<dbReference type="SUPFAM" id="SSF53383">
    <property type="entry name" value="PLP-dependent transferases"/>
    <property type="match status" value="1"/>
</dbReference>
<dbReference type="PROSITE" id="PS00600">
    <property type="entry name" value="AA_TRANSFER_CLASS_3"/>
    <property type="match status" value="1"/>
</dbReference>
<reference key="1">
    <citation type="journal article" date="2003" name="Proc. Natl. Acad. Sci. U.S.A.">
        <title>Genome sequence of the cyanobacterium Prochlorococcus marinus SS120, a nearly minimal oxyphototrophic genome.</title>
        <authorList>
            <person name="Dufresne A."/>
            <person name="Salanoubat M."/>
            <person name="Partensky F."/>
            <person name="Artiguenave F."/>
            <person name="Axmann I.M."/>
            <person name="Barbe V."/>
            <person name="Duprat S."/>
            <person name="Galperin M.Y."/>
            <person name="Koonin E.V."/>
            <person name="Le Gall F."/>
            <person name="Makarova K.S."/>
            <person name="Ostrowski M."/>
            <person name="Oztas S."/>
            <person name="Robert C."/>
            <person name="Rogozin I.B."/>
            <person name="Scanlan D.J."/>
            <person name="Tandeau de Marsac N."/>
            <person name="Weissenbach J."/>
            <person name="Wincker P."/>
            <person name="Wolf Y.I."/>
            <person name="Hess W.R."/>
        </authorList>
    </citation>
    <scope>NUCLEOTIDE SEQUENCE [LARGE SCALE GENOMIC DNA]</scope>
    <source>
        <strain>SARG / CCMP1375 / SS120</strain>
    </source>
</reference>
<protein>
    <recommendedName>
        <fullName evidence="1">Glutamate-1-semialdehyde 2,1-aminomutase</fullName>
        <shortName evidence="1">GSA</shortName>
        <ecNumber evidence="1">5.4.3.8</ecNumber>
    </recommendedName>
    <alternativeName>
        <fullName evidence="1">Glutamate-1-semialdehyde aminotransferase</fullName>
        <shortName evidence="1">GSA-AT</shortName>
    </alternativeName>
</protein>
<organism>
    <name type="scientific">Prochlorococcus marinus (strain SARG / CCMP1375 / SS120)</name>
    <dbReference type="NCBI Taxonomy" id="167539"/>
    <lineage>
        <taxon>Bacteria</taxon>
        <taxon>Bacillati</taxon>
        <taxon>Cyanobacteriota</taxon>
        <taxon>Cyanophyceae</taxon>
        <taxon>Synechococcales</taxon>
        <taxon>Prochlorococcaceae</taxon>
        <taxon>Prochlorococcus</taxon>
    </lineage>
</organism>
<evidence type="ECO:0000255" key="1">
    <source>
        <dbReference type="HAMAP-Rule" id="MF_00375"/>
    </source>
</evidence>
<keyword id="KW-0149">Chlorophyll biosynthesis</keyword>
<keyword id="KW-0963">Cytoplasm</keyword>
<keyword id="KW-0413">Isomerase</keyword>
<keyword id="KW-0627">Porphyrin biosynthesis</keyword>
<keyword id="KW-0663">Pyridoxal phosphate</keyword>
<keyword id="KW-1185">Reference proteome</keyword>
<comment type="catalytic activity">
    <reaction evidence="1">
        <text>(S)-4-amino-5-oxopentanoate = 5-aminolevulinate</text>
        <dbReference type="Rhea" id="RHEA:14265"/>
        <dbReference type="ChEBI" id="CHEBI:57501"/>
        <dbReference type="ChEBI" id="CHEBI:356416"/>
        <dbReference type="EC" id="5.4.3.8"/>
    </reaction>
</comment>
<comment type="cofactor">
    <cofactor evidence="1">
        <name>pyridoxal 5'-phosphate</name>
        <dbReference type="ChEBI" id="CHEBI:597326"/>
    </cofactor>
</comment>
<comment type="pathway">
    <text evidence="1">Porphyrin-containing compound metabolism; protoporphyrin-IX biosynthesis; 5-aminolevulinate from L-glutamyl-tRNA(Glu): step 2/2.</text>
</comment>
<comment type="pathway">
    <text evidence="1">Porphyrin-containing compound metabolism; chlorophyll biosynthesis.</text>
</comment>
<comment type="subunit">
    <text evidence="1">Homodimer.</text>
</comment>
<comment type="subcellular location">
    <subcellularLocation>
        <location evidence="1">Cytoplasm</location>
    </subcellularLocation>
</comment>
<comment type="similarity">
    <text evidence="1">Belongs to the class-III pyridoxal-phosphate-dependent aminotransferase family. HemL subfamily.</text>
</comment>
<gene>
    <name evidence="1" type="primary">hemL</name>
    <name type="ordered locus">Pro_0482</name>
</gene>